<protein>
    <recommendedName>
        <fullName evidence="2">Elongation factor Tu</fullName>
        <shortName evidence="2">EF-Tu</shortName>
        <ecNumber evidence="2">3.6.5.3</ecNumber>
    </recommendedName>
</protein>
<accession>Q0BJ48</accession>
<dbReference type="EC" id="3.6.5.3" evidence="2"/>
<dbReference type="EMBL" id="CP000440">
    <property type="protein sequence ID" value="ABI85812.1"/>
    <property type="molecule type" value="Genomic_DNA"/>
</dbReference>
<dbReference type="EMBL" id="CP000440">
    <property type="protein sequence ID" value="ABI85825.1"/>
    <property type="molecule type" value="Genomic_DNA"/>
</dbReference>
<dbReference type="SMR" id="Q0BJ48"/>
<dbReference type="KEGG" id="bam:Bamb_0252"/>
<dbReference type="KEGG" id="bam:Bamb_0265"/>
<dbReference type="PATRIC" id="fig|339670.21.peg.1355"/>
<dbReference type="eggNOG" id="COG0050">
    <property type="taxonomic scope" value="Bacteria"/>
</dbReference>
<dbReference type="Proteomes" id="UP000000662">
    <property type="component" value="Chromosome 1"/>
</dbReference>
<dbReference type="GO" id="GO:0005829">
    <property type="term" value="C:cytosol"/>
    <property type="evidence" value="ECO:0007669"/>
    <property type="project" value="TreeGrafter"/>
</dbReference>
<dbReference type="GO" id="GO:0005525">
    <property type="term" value="F:GTP binding"/>
    <property type="evidence" value="ECO:0007669"/>
    <property type="project" value="UniProtKB-UniRule"/>
</dbReference>
<dbReference type="GO" id="GO:0003924">
    <property type="term" value="F:GTPase activity"/>
    <property type="evidence" value="ECO:0007669"/>
    <property type="project" value="InterPro"/>
</dbReference>
<dbReference type="GO" id="GO:0097216">
    <property type="term" value="F:guanosine tetraphosphate binding"/>
    <property type="evidence" value="ECO:0007669"/>
    <property type="project" value="UniProtKB-ARBA"/>
</dbReference>
<dbReference type="GO" id="GO:0003746">
    <property type="term" value="F:translation elongation factor activity"/>
    <property type="evidence" value="ECO:0007669"/>
    <property type="project" value="UniProtKB-UniRule"/>
</dbReference>
<dbReference type="CDD" id="cd01884">
    <property type="entry name" value="EF_Tu"/>
    <property type="match status" value="1"/>
</dbReference>
<dbReference type="CDD" id="cd03697">
    <property type="entry name" value="EFTU_II"/>
    <property type="match status" value="1"/>
</dbReference>
<dbReference type="CDD" id="cd03707">
    <property type="entry name" value="EFTU_III"/>
    <property type="match status" value="1"/>
</dbReference>
<dbReference type="FunFam" id="2.40.30.10:FF:000001">
    <property type="entry name" value="Elongation factor Tu"/>
    <property type="match status" value="1"/>
</dbReference>
<dbReference type="FunFam" id="3.40.50.300:FF:000003">
    <property type="entry name" value="Elongation factor Tu"/>
    <property type="match status" value="1"/>
</dbReference>
<dbReference type="Gene3D" id="3.40.50.300">
    <property type="entry name" value="P-loop containing nucleotide triphosphate hydrolases"/>
    <property type="match status" value="1"/>
</dbReference>
<dbReference type="Gene3D" id="2.40.30.10">
    <property type="entry name" value="Translation factors"/>
    <property type="match status" value="2"/>
</dbReference>
<dbReference type="HAMAP" id="MF_00118_B">
    <property type="entry name" value="EF_Tu_B"/>
    <property type="match status" value="1"/>
</dbReference>
<dbReference type="InterPro" id="IPR041709">
    <property type="entry name" value="EF-Tu_GTP-bd"/>
</dbReference>
<dbReference type="InterPro" id="IPR050055">
    <property type="entry name" value="EF-Tu_GTPase"/>
</dbReference>
<dbReference type="InterPro" id="IPR004161">
    <property type="entry name" value="EFTu-like_2"/>
</dbReference>
<dbReference type="InterPro" id="IPR033720">
    <property type="entry name" value="EFTU_2"/>
</dbReference>
<dbReference type="InterPro" id="IPR031157">
    <property type="entry name" value="G_TR_CS"/>
</dbReference>
<dbReference type="InterPro" id="IPR027417">
    <property type="entry name" value="P-loop_NTPase"/>
</dbReference>
<dbReference type="InterPro" id="IPR005225">
    <property type="entry name" value="Small_GTP-bd"/>
</dbReference>
<dbReference type="InterPro" id="IPR000795">
    <property type="entry name" value="T_Tr_GTP-bd_dom"/>
</dbReference>
<dbReference type="InterPro" id="IPR009000">
    <property type="entry name" value="Transl_B-barrel_sf"/>
</dbReference>
<dbReference type="InterPro" id="IPR009001">
    <property type="entry name" value="Transl_elong_EF1A/Init_IF2_C"/>
</dbReference>
<dbReference type="InterPro" id="IPR004541">
    <property type="entry name" value="Transl_elong_EFTu/EF1A_bac/org"/>
</dbReference>
<dbReference type="InterPro" id="IPR004160">
    <property type="entry name" value="Transl_elong_EFTu/EF1A_C"/>
</dbReference>
<dbReference type="NCBIfam" id="TIGR00485">
    <property type="entry name" value="EF-Tu"/>
    <property type="match status" value="1"/>
</dbReference>
<dbReference type="NCBIfam" id="NF000766">
    <property type="entry name" value="PRK00049.1"/>
    <property type="match status" value="1"/>
</dbReference>
<dbReference type="NCBIfam" id="NF009372">
    <property type="entry name" value="PRK12735.1"/>
    <property type="match status" value="1"/>
</dbReference>
<dbReference type="NCBIfam" id="NF009373">
    <property type="entry name" value="PRK12736.1"/>
    <property type="match status" value="1"/>
</dbReference>
<dbReference type="NCBIfam" id="TIGR00231">
    <property type="entry name" value="small_GTP"/>
    <property type="match status" value="1"/>
</dbReference>
<dbReference type="PANTHER" id="PTHR43721:SF22">
    <property type="entry name" value="ELONGATION FACTOR TU, MITOCHONDRIAL"/>
    <property type="match status" value="1"/>
</dbReference>
<dbReference type="PANTHER" id="PTHR43721">
    <property type="entry name" value="ELONGATION FACTOR TU-RELATED"/>
    <property type="match status" value="1"/>
</dbReference>
<dbReference type="Pfam" id="PF00009">
    <property type="entry name" value="GTP_EFTU"/>
    <property type="match status" value="1"/>
</dbReference>
<dbReference type="Pfam" id="PF03144">
    <property type="entry name" value="GTP_EFTU_D2"/>
    <property type="match status" value="1"/>
</dbReference>
<dbReference type="Pfam" id="PF03143">
    <property type="entry name" value="GTP_EFTU_D3"/>
    <property type="match status" value="1"/>
</dbReference>
<dbReference type="PRINTS" id="PR00315">
    <property type="entry name" value="ELONGATNFCT"/>
</dbReference>
<dbReference type="SUPFAM" id="SSF50465">
    <property type="entry name" value="EF-Tu/eEF-1alpha/eIF2-gamma C-terminal domain"/>
    <property type="match status" value="1"/>
</dbReference>
<dbReference type="SUPFAM" id="SSF52540">
    <property type="entry name" value="P-loop containing nucleoside triphosphate hydrolases"/>
    <property type="match status" value="1"/>
</dbReference>
<dbReference type="SUPFAM" id="SSF50447">
    <property type="entry name" value="Translation proteins"/>
    <property type="match status" value="1"/>
</dbReference>
<dbReference type="PROSITE" id="PS00301">
    <property type="entry name" value="G_TR_1"/>
    <property type="match status" value="1"/>
</dbReference>
<dbReference type="PROSITE" id="PS51722">
    <property type="entry name" value="G_TR_2"/>
    <property type="match status" value="1"/>
</dbReference>
<gene>
    <name evidence="2" type="primary">tuf1</name>
    <name type="ordered locus">Bamb_0252</name>
</gene>
<gene>
    <name evidence="2" type="primary">tuf2</name>
    <name type="ordered locus">Bamb_0265</name>
</gene>
<proteinExistence type="inferred from homology"/>
<feature type="chain" id="PRO_0000337334" description="Elongation factor Tu">
    <location>
        <begin position="1"/>
        <end position="396"/>
    </location>
</feature>
<feature type="domain" description="tr-type G">
    <location>
        <begin position="10"/>
        <end position="206"/>
    </location>
</feature>
<feature type="region of interest" description="G1" evidence="1">
    <location>
        <begin position="19"/>
        <end position="26"/>
    </location>
</feature>
<feature type="region of interest" description="G2" evidence="1">
    <location>
        <begin position="60"/>
        <end position="64"/>
    </location>
</feature>
<feature type="region of interest" description="G3" evidence="1">
    <location>
        <begin position="81"/>
        <end position="84"/>
    </location>
</feature>
<feature type="region of interest" description="G4" evidence="1">
    <location>
        <begin position="136"/>
        <end position="139"/>
    </location>
</feature>
<feature type="region of interest" description="G5" evidence="1">
    <location>
        <begin position="174"/>
        <end position="176"/>
    </location>
</feature>
<feature type="binding site" evidence="2">
    <location>
        <begin position="19"/>
        <end position="26"/>
    </location>
    <ligand>
        <name>GTP</name>
        <dbReference type="ChEBI" id="CHEBI:37565"/>
    </ligand>
</feature>
<feature type="binding site" evidence="2">
    <location>
        <position position="26"/>
    </location>
    <ligand>
        <name>Mg(2+)</name>
        <dbReference type="ChEBI" id="CHEBI:18420"/>
    </ligand>
</feature>
<feature type="binding site" evidence="2">
    <location>
        <begin position="81"/>
        <end position="85"/>
    </location>
    <ligand>
        <name>GTP</name>
        <dbReference type="ChEBI" id="CHEBI:37565"/>
    </ligand>
</feature>
<feature type="binding site" evidence="2">
    <location>
        <begin position="136"/>
        <end position="139"/>
    </location>
    <ligand>
        <name>GTP</name>
        <dbReference type="ChEBI" id="CHEBI:37565"/>
    </ligand>
</feature>
<evidence type="ECO:0000250" key="1"/>
<evidence type="ECO:0000255" key="2">
    <source>
        <dbReference type="HAMAP-Rule" id="MF_00118"/>
    </source>
</evidence>
<organism>
    <name type="scientific">Burkholderia ambifaria (strain ATCC BAA-244 / DSM 16087 / CCUG 44356 / LMG 19182 / AMMD)</name>
    <name type="common">Burkholderia cepacia (strain AMMD)</name>
    <dbReference type="NCBI Taxonomy" id="339670"/>
    <lineage>
        <taxon>Bacteria</taxon>
        <taxon>Pseudomonadati</taxon>
        <taxon>Pseudomonadota</taxon>
        <taxon>Betaproteobacteria</taxon>
        <taxon>Burkholderiales</taxon>
        <taxon>Burkholderiaceae</taxon>
        <taxon>Burkholderia</taxon>
        <taxon>Burkholderia cepacia complex</taxon>
    </lineage>
</organism>
<name>EFTU_BURCM</name>
<sequence length="396" mass="42934">MAKGKFERTKPHVNVGTIGHVDHGKTTLTAAITTVLTKKFGGEAKAYDQIDAAPEEKARGITINTAHVEYETANRHYAHVDCPGHADYVKNMITGAAQMDGAILVCSAADGPMPQTREHILLARQVGVPYIIVFLNKCDMVDDAELLELVEMEVRELLSKYDFPGDDTPIVKGSAKLALEGDTGELGEVAIMSLADALDTYIPTPERAVDGAFLMPVEDVFSISGRGTVVTGRVERGIVKVGEEIEIVGIKPTVKTTCTGVEMFRKLLDQGQAGDNVGILLRGTKREDVERGQVLAKPGSITPHTHFTAEVYVLSKDEGGRHTPFFNNYRPQFYFRTTDVTGSIELPKDKEMVMPGDNVSITVKLIAPIAMEEGLRFAIREGGRTVGAGVVAKIIE</sequence>
<comment type="function">
    <text evidence="2">GTP hydrolase that promotes the GTP-dependent binding of aminoacyl-tRNA to the A-site of ribosomes during protein biosynthesis.</text>
</comment>
<comment type="catalytic activity">
    <reaction evidence="2">
        <text>GTP + H2O = GDP + phosphate + H(+)</text>
        <dbReference type="Rhea" id="RHEA:19669"/>
        <dbReference type="ChEBI" id="CHEBI:15377"/>
        <dbReference type="ChEBI" id="CHEBI:15378"/>
        <dbReference type="ChEBI" id="CHEBI:37565"/>
        <dbReference type="ChEBI" id="CHEBI:43474"/>
        <dbReference type="ChEBI" id="CHEBI:58189"/>
        <dbReference type="EC" id="3.6.5.3"/>
    </reaction>
    <physiologicalReaction direction="left-to-right" evidence="2">
        <dbReference type="Rhea" id="RHEA:19670"/>
    </physiologicalReaction>
</comment>
<comment type="subunit">
    <text evidence="2">Monomer.</text>
</comment>
<comment type="subcellular location">
    <subcellularLocation>
        <location evidence="2">Cytoplasm</location>
    </subcellularLocation>
</comment>
<comment type="similarity">
    <text evidence="2">Belongs to the TRAFAC class translation factor GTPase superfamily. Classic translation factor GTPase family. EF-Tu/EF-1A subfamily.</text>
</comment>
<reference key="1">
    <citation type="submission" date="2006-08" db="EMBL/GenBank/DDBJ databases">
        <title>Complete sequence of chromosome 1 of Burkholderia cepacia AMMD.</title>
        <authorList>
            <person name="Copeland A."/>
            <person name="Lucas S."/>
            <person name="Lapidus A."/>
            <person name="Barry K."/>
            <person name="Detter J.C."/>
            <person name="Glavina del Rio T."/>
            <person name="Hammon N."/>
            <person name="Israni S."/>
            <person name="Pitluck S."/>
            <person name="Bruce D."/>
            <person name="Chain P."/>
            <person name="Malfatti S."/>
            <person name="Shin M."/>
            <person name="Vergez L."/>
            <person name="Schmutz J."/>
            <person name="Larimer F."/>
            <person name="Land M."/>
            <person name="Hauser L."/>
            <person name="Kyrpides N."/>
            <person name="Kim E."/>
            <person name="Parke J."/>
            <person name="Coenye T."/>
            <person name="Konstantinidis K."/>
            <person name="Ramette A."/>
            <person name="Tiedje J."/>
            <person name="Richardson P."/>
        </authorList>
    </citation>
    <scope>NUCLEOTIDE SEQUENCE [LARGE SCALE GENOMIC DNA]</scope>
    <source>
        <strain>ATCC BAA-244 / DSM 16087 / CCUG 44356 / LMG 19182 / AMMD</strain>
    </source>
</reference>
<keyword id="KW-0963">Cytoplasm</keyword>
<keyword id="KW-0251">Elongation factor</keyword>
<keyword id="KW-0342">GTP-binding</keyword>
<keyword id="KW-0378">Hydrolase</keyword>
<keyword id="KW-0460">Magnesium</keyword>
<keyword id="KW-0479">Metal-binding</keyword>
<keyword id="KW-0547">Nucleotide-binding</keyword>
<keyword id="KW-0648">Protein biosynthesis</keyword>